<feature type="chain" id="PRO_1000198816" description="Anthranilate phosphoribosyltransferase">
    <location>
        <begin position="1"/>
        <end position="335"/>
    </location>
</feature>
<feature type="binding site" evidence="1">
    <location>
        <position position="80"/>
    </location>
    <ligand>
        <name>5-phospho-alpha-D-ribose 1-diphosphate</name>
        <dbReference type="ChEBI" id="CHEBI:58017"/>
    </ligand>
</feature>
<feature type="binding site" evidence="1">
    <location>
        <position position="80"/>
    </location>
    <ligand>
        <name>anthranilate</name>
        <dbReference type="ChEBI" id="CHEBI:16567"/>
        <label>1</label>
    </ligand>
</feature>
<feature type="binding site" evidence="1">
    <location>
        <begin position="83"/>
        <end position="84"/>
    </location>
    <ligand>
        <name>5-phospho-alpha-D-ribose 1-diphosphate</name>
        <dbReference type="ChEBI" id="CHEBI:58017"/>
    </ligand>
</feature>
<feature type="binding site" evidence="1">
    <location>
        <position position="88"/>
    </location>
    <ligand>
        <name>5-phospho-alpha-D-ribose 1-diphosphate</name>
        <dbReference type="ChEBI" id="CHEBI:58017"/>
    </ligand>
</feature>
<feature type="binding site" evidence="1">
    <location>
        <begin position="90"/>
        <end position="93"/>
    </location>
    <ligand>
        <name>5-phospho-alpha-D-ribose 1-diphosphate</name>
        <dbReference type="ChEBI" id="CHEBI:58017"/>
    </ligand>
</feature>
<feature type="binding site" evidence="1">
    <location>
        <position position="92"/>
    </location>
    <ligand>
        <name>Mg(2+)</name>
        <dbReference type="ChEBI" id="CHEBI:18420"/>
        <label>1</label>
    </ligand>
</feature>
<feature type="binding site" evidence="1">
    <location>
        <begin position="108"/>
        <end position="116"/>
    </location>
    <ligand>
        <name>5-phospho-alpha-D-ribose 1-diphosphate</name>
        <dbReference type="ChEBI" id="CHEBI:58017"/>
    </ligand>
</feature>
<feature type="binding site" evidence="1">
    <location>
        <position position="111"/>
    </location>
    <ligand>
        <name>anthranilate</name>
        <dbReference type="ChEBI" id="CHEBI:16567"/>
        <label>1</label>
    </ligand>
</feature>
<feature type="binding site" evidence="1">
    <location>
        <position position="120"/>
    </location>
    <ligand>
        <name>5-phospho-alpha-D-ribose 1-diphosphate</name>
        <dbReference type="ChEBI" id="CHEBI:58017"/>
    </ligand>
</feature>
<feature type="binding site" evidence="1">
    <location>
        <position position="166"/>
    </location>
    <ligand>
        <name>anthranilate</name>
        <dbReference type="ChEBI" id="CHEBI:16567"/>
        <label>2</label>
    </ligand>
</feature>
<feature type="binding site" evidence="1">
    <location>
        <position position="225"/>
    </location>
    <ligand>
        <name>Mg(2+)</name>
        <dbReference type="ChEBI" id="CHEBI:18420"/>
        <label>2</label>
    </ligand>
</feature>
<feature type="binding site" evidence="1">
    <location>
        <position position="226"/>
    </location>
    <ligand>
        <name>Mg(2+)</name>
        <dbReference type="ChEBI" id="CHEBI:18420"/>
        <label>1</label>
    </ligand>
</feature>
<feature type="binding site" evidence="1">
    <location>
        <position position="226"/>
    </location>
    <ligand>
        <name>Mg(2+)</name>
        <dbReference type="ChEBI" id="CHEBI:18420"/>
        <label>2</label>
    </ligand>
</feature>
<dbReference type="EC" id="2.4.2.18" evidence="1"/>
<dbReference type="EMBL" id="AP009049">
    <property type="protein sequence ID" value="BAH06223.1"/>
    <property type="molecule type" value="Genomic_DNA"/>
</dbReference>
<dbReference type="RefSeq" id="WP_012101663.1">
    <property type="nucleotide sequence ID" value="NC_011837.1"/>
</dbReference>
<dbReference type="SMR" id="B9E148"/>
<dbReference type="KEGG" id="ckr:CKR_1172"/>
<dbReference type="HOGENOM" id="CLU_034315_2_1_9"/>
<dbReference type="UniPathway" id="UPA00035">
    <property type="reaction ID" value="UER00041"/>
</dbReference>
<dbReference type="Proteomes" id="UP000007969">
    <property type="component" value="Chromosome"/>
</dbReference>
<dbReference type="GO" id="GO:0005829">
    <property type="term" value="C:cytosol"/>
    <property type="evidence" value="ECO:0007669"/>
    <property type="project" value="TreeGrafter"/>
</dbReference>
<dbReference type="GO" id="GO:0004048">
    <property type="term" value="F:anthranilate phosphoribosyltransferase activity"/>
    <property type="evidence" value="ECO:0007669"/>
    <property type="project" value="UniProtKB-UniRule"/>
</dbReference>
<dbReference type="GO" id="GO:0000287">
    <property type="term" value="F:magnesium ion binding"/>
    <property type="evidence" value="ECO:0007669"/>
    <property type="project" value="UniProtKB-UniRule"/>
</dbReference>
<dbReference type="GO" id="GO:0000162">
    <property type="term" value="P:L-tryptophan biosynthetic process"/>
    <property type="evidence" value="ECO:0007669"/>
    <property type="project" value="UniProtKB-UniRule"/>
</dbReference>
<dbReference type="FunFam" id="3.40.1030.10:FF:000002">
    <property type="entry name" value="Anthranilate phosphoribosyltransferase"/>
    <property type="match status" value="1"/>
</dbReference>
<dbReference type="Gene3D" id="3.40.1030.10">
    <property type="entry name" value="Nucleoside phosphorylase/phosphoribosyltransferase catalytic domain"/>
    <property type="match status" value="1"/>
</dbReference>
<dbReference type="Gene3D" id="1.20.970.10">
    <property type="entry name" value="Transferase, Pyrimidine Nucleoside Phosphorylase, Chain C"/>
    <property type="match status" value="1"/>
</dbReference>
<dbReference type="HAMAP" id="MF_00211">
    <property type="entry name" value="TrpD"/>
    <property type="match status" value="1"/>
</dbReference>
<dbReference type="InterPro" id="IPR005940">
    <property type="entry name" value="Anthranilate_Pribosyl_Tfrase"/>
</dbReference>
<dbReference type="InterPro" id="IPR000312">
    <property type="entry name" value="Glycosyl_Trfase_fam3"/>
</dbReference>
<dbReference type="InterPro" id="IPR017459">
    <property type="entry name" value="Glycosyl_Trfase_fam3_N_dom"/>
</dbReference>
<dbReference type="InterPro" id="IPR036320">
    <property type="entry name" value="Glycosyl_Trfase_fam3_N_dom_sf"/>
</dbReference>
<dbReference type="InterPro" id="IPR035902">
    <property type="entry name" value="Nuc_phospho_transferase"/>
</dbReference>
<dbReference type="NCBIfam" id="TIGR01245">
    <property type="entry name" value="trpD"/>
    <property type="match status" value="1"/>
</dbReference>
<dbReference type="PANTHER" id="PTHR43285">
    <property type="entry name" value="ANTHRANILATE PHOSPHORIBOSYLTRANSFERASE"/>
    <property type="match status" value="1"/>
</dbReference>
<dbReference type="PANTHER" id="PTHR43285:SF2">
    <property type="entry name" value="ANTHRANILATE PHOSPHORIBOSYLTRANSFERASE"/>
    <property type="match status" value="1"/>
</dbReference>
<dbReference type="Pfam" id="PF02885">
    <property type="entry name" value="Glycos_trans_3N"/>
    <property type="match status" value="1"/>
</dbReference>
<dbReference type="Pfam" id="PF00591">
    <property type="entry name" value="Glycos_transf_3"/>
    <property type="match status" value="1"/>
</dbReference>
<dbReference type="SUPFAM" id="SSF52418">
    <property type="entry name" value="Nucleoside phosphorylase/phosphoribosyltransferase catalytic domain"/>
    <property type="match status" value="1"/>
</dbReference>
<dbReference type="SUPFAM" id="SSF47648">
    <property type="entry name" value="Nucleoside phosphorylase/phosphoribosyltransferase N-terminal domain"/>
    <property type="match status" value="1"/>
</dbReference>
<gene>
    <name evidence="1" type="primary">trpD</name>
    <name type="ordered locus">CKR_1172</name>
</gene>
<comment type="function">
    <text evidence="1">Catalyzes the transfer of the phosphoribosyl group of 5-phosphorylribose-1-pyrophosphate (PRPP) to anthranilate to yield N-(5'-phosphoribosyl)-anthranilate (PRA).</text>
</comment>
<comment type="catalytic activity">
    <reaction evidence="1">
        <text>N-(5-phospho-beta-D-ribosyl)anthranilate + diphosphate = 5-phospho-alpha-D-ribose 1-diphosphate + anthranilate</text>
        <dbReference type="Rhea" id="RHEA:11768"/>
        <dbReference type="ChEBI" id="CHEBI:16567"/>
        <dbReference type="ChEBI" id="CHEBI:18277"/>
        <dbReference type="ChEBI" id="CHEBI:33019"/>
        <dbReference type="ChEBI" id="CHEBI:58017"/>
        <dbReference type="EC" id="2.4.2.18"/>
    </reaction>
</comment>
<comment type="cofactor">
    <cofactor evidence="1">
        <name>Mg(2+)</name>
        <dbReference type="ChEBI" id="CHEBI:18420"/>
    </cofactor>
    <text evidence="1">Binds 2 magnesium ions per monomer.</text>
</comment>
<comment type="pathway">
    <text evidence="1">Amino-acid biosynthesis; L-tryptophan biosynthesis; L-tryptophan from chorismate: step 2/5.</text>
</comment>
<comment type="subunit">
    <text evidence="1">Homodimer.</text>
</comment>
<comment type="similarity">
    <text evidence="1">Belongs to the anthranilate phosphoribosyltransferase family.</text>
</comment>
<proteinExistence type="inferred from homology"/>
<keyword id="KW-0028">Amino-acid biosynthesis</keyword>
<keyword id="KW-0057">Aromatic amino acid biosynthesis</keyword>
<keyword id="KW-0328">Glycosyltransferase</keyword>
<keyword id="KW-0460">Magnesium</keyword>
<keyword id="KW-0479">Metal-binding</keyword>
<keyword id="KW-0808">Transferase</keyword>
<keyword id="KW-0822">Tryptophan biosynthesis</keyword>
<sequence length="335" mass="35757">MLNEAIKEVLSGKDLSESQSEQVMENIMNGQESSALIAGFLIALKMKGESIPEITGCAKAMRNMAVPVKLKSQYAIDTCGTGGDGGRTFNISTAAAIIAASAGVKVAKHGNRAVSSQSGSADVLKELGININLEKSKVEHCIDNVGMGFLFAPSYHSAMKNVAGIRRDLGVRTIFNILGPLTNPAFVKGQVMGVYDRKLLEPAAKTLLNLGCERAMVVHGGDGLDEITTTTVTYVCEVKDGEIRKYTLSPGDFGIKTTFYKNIAGGTARENAAIIMDILKGKTGPERDIVVLNSAAAIYIGKKAEDLKEGILRANELIDSGKAYAKYEEILNYNN</sequence>
<name>TRPD_CLOK1</name>
<protein>
    <recommendedName>
        <fullName evidence="1">Anthranilate phosphoribosyltransferase</fullName>
        <ecNumber evidence="1">2.4.2.18</ecNumber>
    </recommendedName>
</protein>
<accession>B9E148</accession>
<reference key="1">
    <citation type="submission" date="2005-09" db="EMBL/GenBank/DDBJ databases">
        <title>Complete genome sequence of Clostridium kluyveri and comparative genomics of Clostridia species.</title>
        <authorList>
            <person name="Inui M."/>
            <person name="Nonaka H."/>
            <person name="Shinoda Y."/>
            <person name="Ikenaga Y."/>
            <person name="Abe M."/>
            <person name="Naito K."/>
            <person name="Vertes A.A."/>
            <person name="Yukawa H."/>
        </authorList>
    </citation>
    <scope>NUCLEOTIDE SEQUENCE [LARGE SCALE GENOMIC DNA]</scope>
    <source>
        <strain>NBRC 12016</strain>
    </source>
</reference>
<evidence type="ECO:0000255" key="1">
    <source>
        <dbReference type="HAMAP-Rule" id="MF_00211"/>
    </source>
</evidence>
<organism>
    <name type="scientific">Clostridium kluyveri (strain NBRC 12016)</name>
    <dbReference type="NCBI Taxonomy" id="583346"/>
    <lineage>
        <taxon>Bacteria</taxon>
        <taxon>Bacillati</taxon>
        <taxon>Bacillota</taxon>
        <taxon>Clostridia</taxon>
        <taxon>Eubacteriales</taxon>
        <taxon>Clostridiaceae</taxon>
        <taxon>Clostridium</taxon>
    </lineage>
</organism>